<dbReference type="EMBL" id="AP009153">
    <property type="protein sequence ID" value="BAH38683.1"/>
    <property type="molecule type" value="Genomic_DNA"/>
</dbReference>
<dbReference type="RefSeq" id="WP_012683130.1">
    <property type="nucleotide sequence ID" value="NC_012489.1"/>
</dbReference>
<dbReference type="SMR" id="C1A8X3"/>
<dbReference type="STRING" id="379066.GAU_1641"/>
<dbReference type="KEGG" id="gau:GAU_1641"/>
<dbReference type="eggNOG" id="COG0333">
    <property type="taxonomic scope" value="Bacteria"/>
</dbReference>
<dbReference type="HOGENOM" id="CLU_129084_1_3_0"/>
<dbReference type="OrthoDB" id="9812874at2"/>
<dbReference type="Proteomes" id="UP000002209">
    <property type="component" value="Chromosome"/>
</dbReference>
<dbReference type="GO" id="GO:0015934">
    <property type="term" value="C:large ribosomal subunit"/>
    <property type="evidence" value="ECO:0007669"/>
    <property type="project" value="InterPro"/>
</dbReference>
<dbReference type="GO" id="GO:0003735">
    <property type="term" value="F:structural constituent of ribosome"/>
    <property type="evidence" value="ECO:0007669"/>
    <property type="project" value="InterPro"/>
</dbReference>
<dbReference type="GO" id="GO:0006412">
    <property type="term" value="P:translation"/>
    <property type="evidence" value="ECO:0007669"/>
    <property type="project" value="UniProtKB-UniRule"/>
</dbReference>
<dbReference type="HAMAP" id="MF_00340">
    <property type="entry name" value="Ribosomal_bL32"/>
    <property type="match status" value="1"/>
</dbReference>
<dbReference type="InterPro" id="IPR002677">
    <property type="entry name" value="Ribosomal_bL32"/>
</dbReference>
<dbReference type="InterPro" id="IPR044957">
    <property type="entry name" value="Ribosomal_bL32_bact"/>
</dbReference>
<dbReference type="InterPro" id="IPR011332">
    <property type="entry name" value="Ribosomal_zn-bd"/>
</dbReference>
<dbReference type="NCBIfam" id="TIGR01031">
    <property type="entry name" value="rpmF_bact"/>
    <property type="match status" value="1"/>
</dbReference>
<dbReference type="PANTHER" id="PTHR35534">
    <property type="entry name" value="50S RIBOSOMAL PROTEIN L32"/>
    <property type="match status" value="1"/>
</dbReference>
<dbReference type="PANTHER" id="PTHR35534:SF1">
    <property type="entry name" value="LARGE RIBOSOMAL SUBUNIT PROTEIN BL32"/>
    <property type="match status" value="1"/>
</dbReference>
<dbReference type="Pfam" id="PF01783">
    <property type="entry name" value="Ribosomal_L32p"/>
    <property type="match status" value="1"/>
</dbReference>
<dbReference type="SUPFAM" id="SSF57829">
    <property type="entry name" value="Zn-binding ribosomal proteins"/>
    <property type="match status" value="1"/>
</dbReference>
<sequence>MAVPKRRTSKRRKRARNTHKVAPAIVIQSCPQCSAAKRPHRVCAECGYYAGEQRVAAQEA</sequence>
<organism>
    <name type="scientific">Gemmatimonas aurantiaca (strain DSM 14586 / JCM 11422 / NBRC 100505 / T-27)</name>
    <dbReference type="NCBI Taxonomy" id="379066"/>
    <lineage>
        <taxon>Bacteria</taxon>
        <taxon>Pseudomonadati</taxon>
        <taxon>Gemmatimonadota</taxon>
        <taxon>Gemmatimonadia</taxon>
        <taxon>Gemmatimonadales</taxon>
        <taxon>Gemmatimonadaceae</taxon>
        <taxon>Gemmatimonas</taxon>
    </lineage>
</organism>
<gene>
    <name evidence="1" type="primary">rpmF</name>
    <name type="ordered locus">GAU_1641</name>
</gene>
<name>RL32_GEMAT</name>
<feature type="chain" id="PRO_1000205263" description="Large ribosomal subunit protein bL32">
    <location>
        <begin position="1"/>
        <end position="60"/>
    </location>
</feature>
<feature type="region of interest" description="Disordered" evidence="2">
    <location>
        <begin position="1"/>
        <end position="20"/>
    </location>
</feature>
<feature type="compositionally biased region" description="Basic residues" evidence="2">
    <location>
        <begin position="1"/>
        <end position="19"/>
    </location>
</feature>
<accession>C1A8X3</accession>
<proteinExistence type="inferred from homology"/>
<reference key="1">
    <citation type="submission" date="2006-03" db="EMBL/GenBank/DDBJ databases">
        <title>Complete genome sequence of Gemmatimonas aurantiaca T-27 that represents a novel phylum Gemmatimonadetes.</title>
        <authorList>
            <person name="Takasaki K."/>
            <person name="Ichikawa N."/>
            <person name="Miura H."/>
            <person name="Matsushita S."/>
            <person name="Watanabe Y."/>
            <person name="Oguchi A."/>
            <person name="Ankai A."/>
            <person name="Yashiro I."/>
            <person name="Takahashi M."/>
            <person name="Terui Y."/>
            <person name="Fukui S."/>
            <person name="Yokoyama H."/>
            <person name="Tanikawa S."/>
            <person name="Hanada S."/>
            <person name="Kamagata Y."/>
            <person name="Fujita N."/>
        </authorList>
    </citation>
    <scope>NUCLEOTIDE SEQUENCE [LARGE SCALE GENOMIC DNA]</scope>
    <source>
        <strain>DSM 14586 / JCM 11422 / NBRC 100505 / T-27</strain>
    </source>
</reference>
<keyword id="KW-1185">Reference proteome</keyword>
<keyword id="KW-0687">Ribonucleoprotein</keyword>
<keyword id="KW-0689">Ribosomal protein</keyword>
<comment type="similarity">
    <text evidence="1">Belongs to the bacterial ribosomal protein bL32 family.</text>
</comment>
<evidence type="ECO:0000255" key="1">
    <source>
        <dbReference type="HAMAP-Rule" id="MF_00340"/>
    </source>
</evidence>
<evidence type="ECO:0000256" key="2">
    <source>
        <dbReference type="SAM" id="MobiDB-lite"/>
    </source>
</evidence>
<evidence type="ECO:0000305" key="3"/>
<protein>
    <recommendedName>
        <fullName evidence="1">Large ribosomal subunit protein bL32</fullName>
    </recommendedName>
    <alternativeName>
        <fullName evidence="3">50S ribosomal protein L32</fullName>
    </alternativeName>
</protein>